<keyword id="KW-0010">Activator</keyword>
<keyword id="KW-0963">Cytoplasm</keyword>
<keyword id="KW-0238">DNA-binding</keyword>
<keyword id="KW-0349">Heme</keyword>
<keyword id="KW-0408">Iron</keyword>
<keyword id="KW-0479">Metal-binding</keyword>
<keyword id="KW-1185">Reference proteome</keyword>
<keyword id="KW-0677">Repeat</keyword>
<keyword id="KW-0804">Transcription</keyword>
<keyword id="KW-0805">Transcription regulation</keyword>
<name>RCOM2_PARXL</name>
<dbReference type="EMBL" id="CP000272">
    <property type="protein sequence ID" value="ABE35955.1"/>
    <property type="molecule type" value="Genomic_DNA"/>
</dbReference>
<dbReference type="RefSeq" id="WP_011493215.1">
    <property type="nucleotide sequence ID" value="NC_007953.1"/>
</dbReference>
<dbReference type="SMR" id="Q13IY4"/>
<dbReference type="STRING" id="266265.Bxe_C0028"/>
<dbReference type="KEGG" id="bxb:DR64_8397"/>
<dbReference type="KEGG" id="bxe:Bxe_C0028"/>
<dbReference type="PATRIC" id="fig|266265.5.peg.7807"/>
<dbReference type="eggNOG" id="COG3279">
    <property type="taxonomic scope" value="Bacteria"/>
</dbReference>
<dbReference type="eggNOG" id="COG5000">
    <property type="taxonomic scope" value="Bacteria"/>
</dbReference>
<dbReference type="OrthoDB" id="9781059at2"/>
<dbReference type="Proteomes" id="UP000001817">
    <property type="component" value="Chromosome 3"/>
</dbReference>
<dbReference type="GO" id="GO:0005737">
    <property type="term" value="C:cytoplasm"/>
    <property type="evidence" value="ECO:0007669"/>
    <property type="project" value="UniProtKB-SubCell"/>
</dbReference>
<dbReference type="GO" id="GO:0003677">
    <property type="term" value="F:DNA binding"/>
    <property type="evidence" value="ECO:0007669"/>
    <property type="project" value="UniProtKB-KW"/>
</dbReference>
<dbReference type="GO" id="GO:0046872">
    <property type="term" value="F:metal ion binding"/>
    <property type="evidence" value="ECO:0007669"/>
    <property type="project" value="UniProtKB-KW"/>
</dbReference>
<dbReference type="GO" id="GO:0000156">
    <property type="term" value="F:phosphorelay response regulator activity"/>
    <property type="evidence" value="ECO:0007669"/>
    <property type="project" value="InterPro"/>
</dbReference>
<dbReference type="Gene3D" id="2.40.50.1020">
    <property type="entry name" value="LytTr DNA-binding domain"/>
    <property type="match status" value="1"/>
</dbReference>
<dbReference type="Gene3D" id="3.30.450.20">
    <property type="entry name" value="PAS domain"/>
    <property type="match status" value="1"/>
</dbReference>
<dbReference type="InterPro" id="IPR046947">
    <property type="entry name" value="LytR-like"/>
</dbReference>
<dbReference type="InterPro" id="IPR007492">
    <property type="entry name" value="LytTR_DNA-bd_dom"/>
</dbReference>
<dbReference type="InterPro" id="IPR035965">
    <property type="entry name" value="PAS-like_dom_sf"/>
</dbReference>
<dbReference type="PANTHER" id="PTHR37299:SF1">
    <property type="entry name" value="STAGE 0 SPORULATION PROTEIN A HOMOLOG"/>
    <property type="match status" value="1"/>
</dbReference>
<dbReference type="PANTHER" id="PTHR37299">
    <property type="entry name" value="TRANSCRIPTIONAL REGULATOR-RELATED"/>
    <property type="match status" value="1"/>
</dbReference>
<dbReference type="Pfam" id="PF04397">
    <property type="entry name" value="LytTR"/>
    <property type="match status" value="1"/>
</dbReference>
<dbReference type="SMART" id="SM00850">
    <property type="entry name" value="LytTR"/>
    <property type="match status" value="1"/>
</dbReference>
<dbReference type="SUPFAM" id="SSF55785">
    <property type="entry name" value="PYP-like sensor domain (PAS domain)"/>
    <property type="match status" value="1"/>
</dbReference>
<dbReference type="PROSITE" id="PS50930">
    <property type="entry name" value="HTH_LYTTR"/>
    <property type="match status" value="1"/>
</dbReference>
<proteinExistence type="evidence at protein level"/>
<feature type="chain" id="PRO_0000352734" description="Heme-containing CO-sensing transcriptional regulator RcoM 2">
    <location>
        <begin position="1"/>
        <end position="267"/>
    </location>
</feature>
<feature type="domain" description="PAS">
    <location>
        <begin position="15"/>
        <end position="86"/>
    </location>
</feature>
<feature type="domain" description="HTH LytTR-type" evidence="1">
    <location>
        <begin position="161"/>
        <end position="266"/>
    </location>
</feature>
<feature type="binding site" description="axial binding residue">
    <location>
        <position position="74"/>
    </location>
    <ligand>
        <name>heme</name>
        <dbReference type="ChEBI" id="CHEBI:30413"/>
    </ligand>
    <ligandPart>
        <name>Fe</name>
        <dbReference type="ChEBI" id="CHEBI:18248"/>
    </ligandPart>
</feature>
<feature type="binding site" description="axial binding residue">
    <location>
        <position position="104"/>
    </location>
    <ligand>
        <name>heme</name>
        <dbReference type="ChEBI" id="CHEBI:30413"/>
    </ligand>
    <ligandPart>
        <name>Fe</name>
        <dbReference type="ChEBI" id="CHEBI:18248"/>
    </ligandPart>
</feature>
<reference key="1">
    <citation type="journal article" date="2006" name="Proc. Natl. Acad. Sci. U.S.A.">
        <title>Burkholderia xenovorans LB400 harbors a multi-replicon, 9.73-Mbp genome shaped for versatility.</title>
        <authorList>
            <person name="Chain P.S.G."/>
            <person name="Denef V.J."/>
            <person name="Konstantinidis K.T."/>
            <person name="Vergez L.M."/>
            <person name="Agullo L."/>
            <person name="Reyes V.L."/>
            <person name="Hauser L."/>
            <person name="Cordova M."/>
            <person name="Gomez L."/>
            <person name="Gonzalez M."/>
            <person name="Land M."/>
            <person name="Lao V."/>
            <person name="Larimer F."/>
            <person name="LiPuma J.J."/>
            <person name="Mahenthiralingam E."/>
            <person name="Malfatti S.A."/>
            <person name="Marx C.J."/>
            <person name="Parnell J.J."/>
            <person name="Ramette A."/>
            <person name="Richardson P."/>
            <person name="Seeger M."/>
            <person name="Smith D."/>
            <person name="Spilker T."/>
            <person name="Sul W.J."/>
            <person name="Tsoi T.V."/>
            <person name="Ulrich L.E."/>
            <person name="Zhulin I.B."/>
            <person name="Tiedje J.M."/>
        </authorList>
    </citation>
    <scope>NUCLEOTIDE SEQUENCE [LARGE SCALE GENOMIC DNA]</scope>
    <source>
        <strain>LB400</strain>
    </source>
</reference>
<reference key="2">
    <citation type="journal article" date="2008" name="J. Bacteriol.">
        <title>RcoM: a new single-component transcriptional regulator of CO metabolism in bacteria.</title>
        <authorList>
            <person name="Kerby R.L."/>
            <person name="Youn H."/>
            <person name="Roberts G.P."/>
        </authorList>
    </citation>
    <scope>FUNCTION IN REGULATION OF AEROBIC CO OXIDATION</scope>
</reference>
<reference key="3">
    <citation type="journal article" date="2008" name="Biochemistry">
        <title>The transcription regulator RcoM-2 from Burkholderia xenovorans is a cysteine-ligated hemoprotein that undergoes a redox-mediated ligand switch.</title>
        <authorList>
            <person name="Marvin K.A."/>
            <person name="Kerby R.L."/>
            <person name="Youn H."/>
            <person name="Roberts G.P."/>
            <person name="Burstyn J.N."/>
        </authorList>
    </citation>
    <scope>CHARACTERIZATION</scope>
    <scope>HEME COFACTOR</scope>
</reference>
<accession>Q13IY4</accession>
<gene>
    <name type="primary">rcoM2</name>
    <name type="ordered locus">Bxeno_C0027</name>
    <name type="ORF">Bxe_C0028</name>
</gene>
<protein>
    <recommendedName>
        <fullName>Heme-containing CO-sensing transcriptional regulator RcoM 2</fullName>
    </recommendedName>
    <alternativeName>
        <fullName>Regulator of CO metabolism 2</fullName>
        <shortName>RCOM-2</shortName>
    </alternativeName>
</protein>
<evidence type="ECO:0000255" key="1">
    <source>
        <dbReference type="PROSITE-ProRule" id="PRU00112"/>
    </source>
</evidence>
<evidence type="ECO:0000269" key="2">
    <source>
    </source>
</evidence>
<evidence type="ECO:0000305" key="3"/>
<comment type="function">
    <text evidence="2">One-component, b-type heme-containing aerobic sensor and transcriptional regulator that responds to CO by activating the expression of the oxidation operon cox.</text>
</comment>
<comment type="cofactor">
    <cofactor>
        <name>heme</name>
        <dbReference type="ChEBI" id="CHEBI:30413"/>
    </cofactor>
    <text>Binds 1 heme group per subunit.</text>
</comment>
<comment type="subcellular location">
    <subcellularLocation>
        <location evidence="3">Cytoplasm</location>
    </subcellularLocation>
</comment>
<comment type="domain">
    <text>The N-terminal sensor (heme-containing) domain is covalently linked to the C-terminal, DNA-binding response domain.</text>
</comment>
<comment type="domain">
    <text>Binding of an external ligand to the heme located in the N-terminal sensory domain displaces the Met-104 distal heme ligand, triggering a conformational change that activates the C-terminal DNA-binding domain.</text>
</comment>
<comment type="miscellaneous">
    <text>This protein undergoes a ligand switch upon reduction; the heme distal ligand is coordinated by a Cys residue in the inactive Fe(3+) (ferric) form, by Met-104 in the inactive Fe(2+) (ferrous) form, and by CO in the CO-bound active form.</text>
</comment>
<sequence length="267" mass="29471">MKSSESAAATASERRAETFQHKLEQFNPGIVWLDPQGHVSAFNDVALHILGPAGEQSLGVAQDHLFGIDVVQLHPEKSRDKLRFLLQSRDAGGCPVRSPPPVAMMINIPDRILMIKVSKMTGAAGTCGSCMIFYDVTDLTTEPSSQPAGASVPAPRRLFKIPVYRKSRVILIDLKDIVRFQGDGHYTTIVTKDERYLSNLSLADLELRLDSSVYLRVHRSHIVSLPYAVELVKLDESVNLVMDDAEQTQVPVSRSRTAQLKELLGVV</sequence>
<organism>
    <name type="scientific">Paraburkholderia xenovorans (strain LB400)</name>
    <dbReference type="NCBI Taxonomy" id="266265"/>
    <lineage>
        <taxon>Bacteria</taxon>
        <taxon>Pseudomonadati</taxon>
        <taxon>Pseudomonadota</taxon>
        <taxon>Betaproteobacteria</taxon>
        <taxon>Burkholderiales</taxon>
        <taxon>Burkholderiaceae</taxon>
        <taxon>Paraburkholderia</taxon>
    </lineage>
</organism>